<proteinExistence type="inferred from homology"/>
<feature type="chain" id="PRO_0000269578" description="Hemin import ATP-binding protein HmuV">
    <location>
        <begin position="1"/>
        <end position="262"/>
    </location>
</feature>
<feature type="domain" description="ABC transporter" evidence="1">
    <location>
        <begin position="3"/>
        <end position="244"/>
    </location>
</feature>
<feature type="binding site" evidence="1">
    <location>
        <begin position="35"/>
        <end position="42"/>
    </location>
    <ligand>
        <name>ATP</name>
        <dbReference type="ChEBI" id="CHEBI:30616"/>
    </ligand>
</feature>
<reference key="1">
    <citation type="journal article" date="2003" name="Nat. Genet.">
        <title>Comparative analysis of the genome sequences of Bordetella pertussis, Bordetella parapertussis and Bordetella bronchiseptica.</title>
        <authorList>
            <person name="Parkhill J."/>
            <person name="Sebaihia M."/>
            <person name="Preston A."/>
            <person name="Murphy L.D."/>
            <person name="Thomson N.R."/>
            <person name="Harris D.E."/>
            <person name="Holden M.T.G."/>
            <person name="Churcher C.M."/>
            <person name="Bentley S.D."/>
            <person name="Mungall K.L."/>
            <person name="Cerdeno-Tarraga A.-M."/>
            <person name="Temple L."/>
            <person name="James K.D."/>
            <person name="Harris B."/>
            <person name="Quail M.A."/>
            <person name="Achtman M."/>
            <person name="Atkin R."/>
            <person name="Baker S."/>
            <person name="Basham D."/>
            <person name="Bason N."/>
            <person name="Cherevach I."/>
            <person name="Chillingworth T."/>
            <person name="Collins M."/>
            <person name="Cronin A."/>
            <person name="Davis P."/>
            <person name="Doggett J."/>
            <person name="Feltwell T."/>
            <person name="Goble A."/>
            <person name="Hamlin N."/>
            <person name="Hauser H."/>
            <person name="Holroyd S."/>
            <person name="Jagels K."/>
            <person name="Leather S."/>
            <person name="Moule S."/>
            <person name="Norberczak H."/>
            <person name="O'Neil S."/>
            <person name="Ormond D."/>
            <person name="Price C."/>
            <person name="Rabbinowitsch E."/>
            <person name="Rutter S."/>
            <person name="Sanders M."/>
            <person name="Saunders D."/>
            <person name="Seeger K."/>
            <person name="Sharp S."/>
            <person name="Simmonds M."/>
            <person name="Skelton J."/>
            <person name="Squares R."/>
            <person name="Squares S."/>
            <person name="Stevens K."/>
            <person name="Unwin L."/>
            <person name="Whitehead S."/>
            <person name="Barrell B.G."/>
            <person name="Maskell D.J."/>
        </authorList>
    </citation>
    <scope>NUCLEOTIDE SEQUENCE [LARGE SCALE GENOMIC DNA]</scope>
    <source>
        <strain>12822 / ATCC BAA-587 / NCTC 13253</strain>
    </source>
</reference>
<organism>
    <name type="scientific">Bordetella parapertussis (strain 12822 / ATCC BAA-587 / NCTC 13253)</name>
    <dbReference type="NCBI Taxonomy" id="257311"/>
    <lineage>
        <taxon>Bacteria</taxon>
        <taxon>Pseudomonadati</taxon>
        <taxon>Pseudomonadota</taxon>
        <taxon>Betaproteobacteria</taxon>
        <taxon>Burkholderiales</taxon>
        <taxon>Alcaligenaceae</taxon>
        <taxon>Bordetella</taxon>
    </lineage>
</organism>
<protein>
    <recommendedName>
        <fullName evidence="1">Hemin import ATP-binding protein HmuV</fullName>
        <ecNumber evidence="1">7.6.2.-</ecNumber>
    </recommendedName>
</protein>
<accession>Q7W359</accession>
<dbReference type="EC" id="7.6.2.-" evidence="1"/>
<dbReference type="EMBL" id="BX640436">
    <property type="protein sequence ID" value="CAE39468.1"/>
    <property type="molecule type" value="Genomic_DNA"/>
</dbReference>
<dbReference type="RefSeq" id="WP_010929427.1">
    <property type="nucleotide sequence ID" value="NC_002928.3"/>
</dbReference>
<dbReference type="SMR" id="Q7W359"/>
<dbReference type="GeneID" id="93205985"/>
<dbReference type="KEGG" id="bpa:BPP4189"/>
<dbReference type="HOGENOM" id="CLU_000604_1_11_4"/>
<dbReference type="Proteomes" id="UP000001421">
    <property type="component" value="Chromosome"/>
</dbReference>
<dbReference type="GO" id="GO:0005886">
    <property type="term" value="C:plasma membrane"/>
    <property type="evidence" value="ECO:0007669"/>
    <property type="project" value="UniProtKB-SubCell"/>
</dbReference>
<dbReference type="GO" id="GO:0005524">
    <property type="term" value="F:ATP binding"/>
    <property type="evidence" value="ECO:0007669"/>
    <property type="project" value="UniProtKB-KW"/>
</dbReference>
<dbReference type="GO" id="GO:0016887">
    <property type="term" value="F:ATP hydrolysis activity"/>
    <property type="evidence" value="ECO:0007669"/>
    <property type="project" value="InterPro"/>
</dbReference>
<dbReference type="CDD" id="cd03214">
    <property type="entry name" value="ABC_Iron-Siderophores_B12_Hemin"/>
    <property type="match status" value="1"/>
</dbReference>
<dbReference type="Gene3D" id="3.40.50.300">
    <property type="entry name" value="P-loop containing nucleotide triphosphate hydrolases"/>
    <property type="match status" value="1"/>
</dbReference>
<dbReference type="InterPro" id="IPR003593">
    <property type="entry name" value="AAA+_ATPase"/>
</dbReference>
<dbReference type="InterPro" id="IPR003439">
    <property type="entry name" value="ABC_transporter-like_ATP-bd"/>
</dbReference>
<dbReference type="InterPro" id="IPR017871">
    <property type="entry name" value="ABC_transporter-like_CS"/>
</dbReference>
<dbReference type="InterPro" id="IPR027417">
    <property type="entry name" value="P-loop_NTPase"/>
</dbReference>
<dbReference type="NCBIfam" id="NF010068">
    <property type="entry name" value="PRK13548.1"/>
    <property type="match status" value="1"/>
</dbReference>
<dbReference type="PANTHER" id="PTHR42794">
    <property type="entry name" value="HEMIN IMPORT ATP-BINDING PROTEIN HMUV"/>
    <property type="match status" value="1"/>
</dbReference>
<dbReference type="PANTHER" id="PTHR42794:SF1">
    <property type="entry name" value="HEMIN IMPORT ATP-BINDING PROTEIN HMUV"/>
    <property type="match status" value="1"/>
</dbReference>
<dbReference type="Pfam" id="PF00005">
    <property type="entry name" value="ABC_tran"/>
    <property type="match status" value="1"/>
</dbReference>
<dbReference type="SMART" id="SM00382">
    <property type="entry name" value="AAA"/>
    <property type="match status" value="1"/>
</dbReference>
<dbReference type="SUPFAM" id="SSF52540">
    <property type="entry name" value="P-loop containing nucleoside triphosphate hydrolases"/>
    <property type="match status" value="1"/>
</dbReference>
<dbReference type="PROSITE" id="PS00211">
    <property type="entry name" value="ABC_TRANSPORTER_1"/>
    <property type="match status" value="1"/>
</dbReference>
<dbReference type="PROSITE" id="PS50893">
    <property type="entry name" value="ABC_TRANSPORTER_2"/>
    <property type="match status" value="1"/>
</dbReference>
<dbReference type="PROSITE" id="PS51261">
    <property type="entry name" value="HMUV"/>
    <property type="match status" value="1"/>
</dbReference>
<name>HMUV_BORPA</name>
<gene>
    <name evidence="1" type="primary">hmuV</name>
    <name type="synonym">bhuV</name>
    <name type="ordered locus">BPP4189</name>
</gene>
<evidence type="ECO:0000255" key="1">
    <source>
        <dbReference type="HAMAP-Rule" id="MF_01718"/>
    </source>
</evidence>
<sequence length="262" mass="27903">MTLQARNLTLARGGAPILTDVSLTLAPGTLVGLLGANGAGKSTLLAALAGELAPRSGQVYLGDADLATLNARQLARRRAVLPQKPSLSFDLGVSDVVGMGAYPFPELDPAAVRQLVRDALEQASVTHLAQRRYPQLSGGEQQRVQFARVLAQCHAMHAPGQTRYLMLDEPISNLDPRHQMELLATARALAHEAGMGVLVIVHDINQAARWCDTLALLADGRLAALGPPADVLTPDHMRRVYGIEADVLAHPTLPGRLLVLAR</sequence>
<comment type="function">
    <text evidence="1">Part of the ABC transporter complex HmuTUV involved in hemin import. Responsible for energy coupling to the transport system.</text>
</comment>
<comment type="subunit">
    <text evidence="1">The complex is composed of two ATP-binding proteins (HmuV), two transmembrane proteins (HmuU) and a solute-binding protein (HmuT).</text>
</comment>
<comment type="subcellular location">
    <subcellularLocation>
        <location evidence="1">Cell inner membrane</location>
        <topology evidence="1">Peripheral membrane protein</topology>
    </subcellularLocation>
</comment>
<comment type="similarity">
    <text evidence="1">Belongs to the ABC transporter superfamily. Heme (hemin) importer (TC 3.A.1.14.5) family.</text>
</comment>
<keyword id="KW-0067">ATP-binding</keyword>
<keyword id="KW-0997">Cell inner membrane</keyword>
<keyword id="KW-1003">Cell membrane</keyword>
<keyword id="KW-0472">Membrane</keyword>
<keyword id="KW-0547">Nucleotide-binding</keyword>
<keyword id="KW-1278">Translocase</keyword>
<keyword id="KW-0813">Transport</keyword>